<evidence type="ECO:0000250" key="1">
    <source>
        <dbReference type="UniProtKB" id="Q13614"/>
    </source>
</evidence>
<evidence type="ECO:0000250" key="2">
    <source>
        <dbReference type="UniProtKB" id="Q8K296"/>
    </source>
</evidence>
<evidence type="ECO:0000255" key="3"/>
<evidence type="ECO:0000255" key="4">
    <source>
        <dbReference type="PROSITE-ProRule" id="PRU00091"/>
    </source>
</evidence>
<evidence type="ECO:0000255" key="5">
    <source>
        <dbReference type="PROSITE-ProRule" id="PRU00669"/>
    </source>
</evidence>
<evidence type="ECO:0000255" key="6">
    <source>
        <dbReference type="PROSITE-ProRule" id="PRU10044"/>
    </source>
</evidence>
<evidence type="ECO:0000256" key="7">
    <source>
        <dbReference type="SAM" id="MobiDB-lite"/>
    </source>
</evidence>
<evidence type="ECO:0000269" key="8">
    <source>
    </source>
</evidence>
<evidence type="ECO:0000269" key="9">
    <source>
    </source>
</evidence>
<evidence type="ECO:0000269" key="10">
    <source>
    </source>
</evidence>
<evidence type="ECO:0000269" key="11">
    <source>
    </source>
</evidence>
<evidence type="ECO:0000269" key="12">
    <source>
    </source>
</evidence>
<evidence type="ECO:0000269" key="13">
    <source>
    </source>
</evidence>
<evidence type="ECO:0000303" key="14">
    <source>
    </source>
</evidence>
<evidence type="ECO:0000303" key="15">
    <source>
    </source>
</evidence>
<evidence type="ECO:0000305" key="16"/>
<evidence type="ECO:0000305" key="17">
    <source>
    </source>
</evidence>
<evidence type="ECO:0000305" key="18">
    <source>
    </source>
</evidence>
<evidence type="ECO:0000312" key="19">
    <source>
        <dbReference type="EMBL" id="BAA20826.2"/>
    </source>
</evidence>
<evidence type="ECO:0000312" key="20">
    <source>
        <dbReference type="HGNC" id="HGNC:7451"/>
    </source>
</evidence>
<evidence type="ECO:0007744" key="21">
    <source>
    </source>
</evidence>
<evidence type="ECO:0007744" key="22">
    <source>
    </source>
</evidence>
<evidence type="ECO:0007744" key="23">
    <source>
    </source>
</evidence>
<evidence type="ECO:0007744" key="24">
    <source>
    </source>
</evidence>
<feature type="chain" id="PRO_0000094936" description="Phosphatidylinositol-3,5-bisphosphate 3-phosphatase MTMR3">
    <location>
        <begin position="1"/>
        <end position="1198"/>
    </location>
</feature>
<feature type="domain" description="Myotubularin phosphatase" evidence="5">
    <location>
        <begin position="155"/>
        <end position="576"/>
    </location>
</feature>
<feature type="zinc finger region" description="FYVE-type" evidence="4">
    <location>
        <begin position="1119"/>
        <end position="1179"/>
    </location>
</feature>
<feature type="region of interest" description="Disordered" evidence="7">
    <location>
        <begin position="265"/>
        <end position="285"/>
    </location>
</feature>
<feature type="region of interest" description="Disordered" evidence="7">
    <location>
        <begin position="590"/>
        <end position="612"/>
    </location>
</feature>
<feature type="region of interest" description="Disordered" evidence="7">
    <location>
        <begin position="650"/>
        <end position="669"/>
    </location>
</feature>
<feature type="region of interest" description="Disordered" evidence="7">
    <location>
        <begin position="716"/>
        <end position="735"/>
    </location>
</feature>
<feature type="region of interest" description="Disordered" evidence="7">
    <location>
        <begin position="855"/>
        <end position="891"/>
    </location>
</feature>
<feature type="region of interest" description="Disordered" evidence="7">
    <location>
        <begin position="933"/>
        <end position="974"/>
    </location>
</feature>
<feature type="region of interest" description="Disordered" evidence="7">
    <location>
        <begin position="993"/>
        <end position="1019"/>
    </location>
</feature>
<feature type="coiled-coil region" evidence="3">
    <location>
        <begin position="1029"/>
        <end position="1062"/>
    </location>
</feature>
<feature type="compositionally biased region" description="Polar residues" evidence="7">
    <location>
        <begin position="265"/>
        <end position="280"/>
    </location>
</feature>
<feature type="compositionally biased region" description="Pro residues" evidence="7">
    <location>
        <begin position="593"/>
        <end position="603"/>
    </location>
</feature>
<feature type="compositionally biased region" description="Basic and acidic residues" evidence="7">
    <location>
        <begin position="716"/>
        <end position="732"/>
    </location>
</feature>
<feature type="compositionally biased region" description="Polar residues" evidence="7">
    <location>
        <begin position="999"/>
        <end position="1010"/>
    </location>
</feature>
<feature type="active site" description="Phosphocysteine intermediate" evidence="6 16">
    <location>
        <position position="413"/>
    </location>
</feature>
<feature type="binding site" evidence="1">
    <location>
        <position position="326"/>
    </location>
    <ligand>
        <name>a 1,2-diacyl-sn-glycero-3-phospho-(1D-myo-inositol-3,5-bisphosphate)</name>
        <dbReference type="ChEBI" id="CHEBI:57923"/>
    </ligand>
</feature>
<feature type="binding site" evidence="1">
    <location>
        <position position="326"/>
    </location>
    <ligand>
        <name>a 1,2-diacyl-sn-glycero-3-phospho-(1D-myo-inositol-3-phosphate)</name>
        <dbReference type="ChEBI" id="CHEBI:58088"/>
    </ligand>
</feature>
<feature type="binding site" evidence="1">
    <location>
        <position position="351"/>
    </location>
    <ligand>
        <name>a 1,2-diacyl-sn-glycero-3-phospho-(1D-myo-inositol-3,5-bisphosphate)</name>
        <dbReference type="ChEBI" id="CHEBI:57923"/>
    </ligand>
</feature>
<feature type="binding site" evidence="1">
    <location>
        <position position="351"/>
    </location>
    <ligand>
        <name>a 1,2-diacyl-sn-glycero-3-phospho-(1D-myo-inositol-3-phosphate)</name>
        <dbReference type="ChEBI" id="CHEBI:58088"/>
    </ligand>
</feature>
<feature type="binding site" evidence="1">
    <location>
        <position position="352"/>
    </location>
    <ligand>
        <name>a 1,2-diacyl-sn-glycero-3-phospho-(1D-myo-inositol-3,5-bisphosphate)</name>
        <dbReference type="ChEBI" id="CHEBI:57923"/>
    </ligand>
</feature>
<feature type="binding site" evidence="1">
    <location>
        <position position="352"/>
    </location>
    <ligand>
        <name>a 1,2-diacyl-sn-glycero-3-phospho-(1D-myo-inositol-3-phosphate)</name>
        <dbReference type="ChEBI" id="CHEBI:58088"/>
    </ligand>
</feature>
<feature type="binding site" evidence="1">
    <location>
        <position position="414"/>
    </location>
    <ligand>
        <name>a 1,2-diacyl-sn-glycero-3-phospho-(1D-myo-inositol-3,5-bisphosphate)</name>
        <dbReference type="ChEBI" id="CHEBI:57923"/>
    </ligand>
</feature>
<feature type="binding site" evidence="1">
    <location>
        <position position="414"/>
    </location>
    <ligand>
        <name>a 1,2-diacyl-sn-glycero-3-phospho-(1D-myo-inositol-3-phosphate)</name>
        <dbReference type="ChEBI" id="CHEBI:58088"/>
    </ligand>
</feature>
<feature type="binding site" evidence="1">
    <location>
        <position position="415"/>
    </location>
    <ligand>
        <name>a 1,2-diacyl-sn-glycero-3-phospho-(1D-myo-inositol-3,5-bisphosphate)</name>
        <dbReference type="ChEBI" id="CHEBI:57923"/>
    </ligand>
</feature>
<feature type="binding site" evidence="1">
    <location>
        <position position="415"/>
    </location>
    <ligand>
        <name>a 1,2-diacyl-sn-glycero-3-phospho-(1D-myo-inositol-3-phosphate)</name>
        <dbReference type="ChEBI" id="CHEBI:58088"/>
    </ligand>
</feature>
<feature type="binding site" evidence="1">
    <location>
        <position position="416"/>
    </location>
    <ligand>
        <name>a 1,2-diacyl-sn-glycero-3-phospho-(1D-myo-inositol-3,5-bisphosphate)</name>
        <dbReference type="ChEBI" id="CHEBI:57923"/>
    </ligand>
</feature>
<feature type="binding site" evidence="1">
    <location>
        <position position="416"/>
    </location>
    <ligand>
        <name>a 1,2-diacyl-sn-glycero-3-phospho-(1D-myo-inositol-3-phosphate)</name>
        <dbReference type="ChEBI" id="CHEBI:58088"/>
    </ligand>
</feature>
<feature type="binding site" evidence="1">
    <location>
        <position position="417"/>
    </location>
    <ligand>
        <name>a 1,2-diacyl-sn-glycero-3-phospho-(1D-myo-inositol-3,5-bisphosphate)</name>
        <dbReference type="ChEBI" id="CHEBI:57923"/>
    </ligand>
</feature>
<feature type="binding site" evidence="1">
    <location>
        <position position="417"/>
    </location>
    <ligand>
        <name>a 1,2-diacyl-sn-glycero-3-phospho-(1D-myo-inositol-3-phosphate)</name>
        <dbReference type="ChEBI" id="CHEBI:58088"/>
    </ligand>
</feature>
<feature type="binding site" evidence="1">
    <location>
        <position position="418"/>
    </location>
    <ligand>
        <name>a 1,2-diacyl-sn-glycero-3-phospho-(1D-myo-inositol-3,5-bisphosphate)</name>
        <dbReference type="ChEBI" id="CHEBI:57923"/>
    </ligand>
</feature>
<feature type="binding site" evidence="1">
    <location>
        <position position="418"/>
    </location>
    <ligand>
        <name>a 1,2-diacyl-sn-glycero-3-phospho-(1D-myo-inositol-3-phosphate)</name>
        <dbReference type="ChEBI" id="CHEBI:58088"/>
    </ligand>
</feature>
<feature type="binding site" evidence="1">
    <location>
        <position position="419"/>
    </location>
    <ligand>
        <name>a 1,2-diacyl-sn-glycero-3-phospho-(1D-myo-inositol-3,5-bisphosphate)</name>
        <dbReference type="ChEBI" id="CHEBI:57923"/>
    </ligand>
</feature>
<feature type="binding site" evidence="1">
    <location>
        <position position="419"/>
    </location>
    <ligand>
        <name>a 1,2-diacyl-sn-glycero-3-phospho-(1D-myo-inositol-3-phosphate)</name>
        <dbReference type="ChEBI" id="CHEBI:58088"/>
    </ligand>
</feature>
<feature type="binding site" evidence="1">
    <location>
        <position position="455"/>
    </location>
    <ligand>
        <name>a 1,2-diacyl-sn-glycero-3-phospho-(1D-myo-inositol-3,5-bisphosphate)</name>
        <dbReference type="ChEBI" id="CHEBI:57923"/>
    </ligand>
</feature>
<feature type="binding site" evidence="1">
    <location>
        <position position="459"/>
    </location>
    <ligand>
        <name>a 1,2-diacyl-sn-glycero-3-phospho-(1D-myo-inositol-3,5-bisphosphate)</name>
        <dbReference type="ChEBI" id="CHEBI:57923"/>
    </ligand>
</feature>
<feature type="binding site" evidence="1">
    <location>
        <position position="459"/>
    </location>
    <ligand>
        <name>a 1,2-diacyl-sn-glycero-3-phospho-(1D-myo-inositol-3-phosphate)</name>
        <dbReference type="ChEBI" id="CHEBI:58088"/>
    </ligand>
</feature>
<feature type="binding site" evidence="4">
    <location>
        <position position="1125"/>
    </location>
    <ligand>
        <name>Zn(2+)</name>
        <dbReference type="ChEBI" id="CHEBI:29105"/>
        <label>1</label>
    </ligand>
</feature>
<feature type="binding site" evidence="4">
    <location>
        <position position="1128"/>
    </location>
    <ligand>
        <name>Zn(2+)</name>
        <dbReference type="ChEBI" id="CHEBI:29105"/>
        <label>1</label>
    </ligand>
</feature>
<feature type="binding site" evidence="4">
    <location>
        <position position="1141"/>
    </location>
    <ligand>
        <name>Zn(2+)</name>
        <dbReference type="ChEBI" id="CHEBI:29105"/>
        <label>2</label>
    </ligand>
</feature>
<feature type="binding site" evidence="4">
    <location>
        <position position="1144"/>
    </location>
    <ligand>
        <name>Zn(2+)</name>
        <dbReference type="ChEBI" id="CHEBI:29105"/>
        <label>2</label>
    </ligand>
</feature>
<feature type="binding site" evidence="4">
    <location>
        <position position="1149"/>
    </location>
    <ligand>
        <name>Zn(2+)</name>
        <dbReference type="ChEBI" id="CHEBI:29105"/>
        <label>1</label>
    </ligand>
</feature>
<feature type="binding site" evidence="4">
    <location>
        <position position="1152"/>
    </location>
    <ligand>
        <name>Zn(2+)</name>
        <dbReference type="ChEBI" id="CHEBI:29105"/>
        <label>1</label>
    </ligand>
</feature>
<feature type="binding site" evidence="4">
    <location>
        <position position="1171"/>
    </location>
    <ligand>
        <name>Zn(2+)</name>
        <dbReference type="ChEBI" id="CHEBI:29105"/>
        <label>2</label>
    </ligand>
</feature>
<feature type="binding site" evidence="4">
    <location>
        <position position="1174"/>
    </location>
    <ligand>
        <name>Zn(2+)</name>
        <dbReference type="ChEBI" id="CHEBI:29105"/>
        <label>2</label>
    </ligand>
</feature>
<feature type="modified residue" description="Phosphoserine" evidence="23">
    <location>
        <position position="8"/>
    </location>
</feature>
<feature type="modified residue" description="Phosphoserine" evidence="23">
    <location>
        <position position="613"/>
    </location>
</feature>
<feature type="modified residue" description="Phosphoserine" evidence="22">
    <location>
        <position position="633"/>
    </location>
</feature>
<feature type="modified residue" description="Phosphoserine" evidence="21 22 23">
    <location>
        <position position="647"/>
    </location>
</feature>
<feature type="modified residue" description="Phosphoserine" evidence="23">
    <location>
        <position position="651"/>
    </location>
</feature>
<feature type="modified residue" description="Phosphothreonine" evidence="22 23 24">
    <location>
        <position position="731"/>
    </location>
</feature>
<feature type="modified residue" description="Phosphoserine" evidence="23">
    <location>
        <position position="906"/>
    </location>
</feature>
<feature type="modified residue" description="Phosphoserine" evidence="23">
    <location>
        <position position="909"/>
    </location>
</feature>
<feature type="modified residue" description="Phosphoserine" evidence="2">
    <location>
        <position position="1064"/>
    </location>
</feature>
<feature type="splice variant" id="VSP_007781" description="In isoform A and isoform C." evidence="15">
    <location>
        <begin position="1076"/>
        <end position="1112"/>
    </location>
</feature>
<feature type="splice variant" id="VSP_007782" description="In isoform A." evidence="16">
    <original>R</original>
    <variation>RDTDRVDQTW</variation>
    <location>
        <position position="1142"/>
    </location>
</feature>
<feature type="sequence variant" id="VAR_035656" description="In a breast cancer sample; somatic mutation." evidence="12">
    <original>V</original>
    <variation>L</variation>
    <location>
        <position position="221"/>
    </location>
</feature>
<feature type="mutagenesis site" description="Loss of lipid phosphatase activity. No effect on function in mitotic abscission." evidence="10 13 18">
    <original>C</original>
    <variation>S</variation>
    <location>
        <position position="413"/>
    </location>
</feature>
<feature type="mutagenesis site" description="Loss of function in mitotic abscission. Decreased interaction with PLK1." evidence="13">
    <original>C</original>
    <variation>S</variation>
    <location>
        <position position="1174"/>
    </location>
</feature>
<feature type="sequence conflict" description="In Ref. 7." evidence="16" ref="7">
    <original>LYPVCHVRNLMLWSAVYLP</original>
    <variation>CILQPFHCGQQKEFGVGYI</variation>
    <location>
        <begin position="560"/>
        <end position="578"/>
    </location>
</feature>
<dbReference type="EC" id="3.1.3.95" evidence="10"/>
<dbReference type="EMBL" id="AF233436">
    <property type="protein sequence ID" value="AAF40203.2"/>
    <property type="molecule type" value="mRNA"/>
</dbReference>
<dbReference type="EMBL" id="AF233437">
    <property type="protein sequence ID" value="AAF40204.1"/>
    <property type="molecule type" value="mRNA"/>
</dbReference>
<dbReference type="EMBL" id="AF233438">
    <property type="protein sequence ID" value="AAF40205.1"/>
    <property type="molecule type" value="mRNA"/>
</dbReference>
<dbReference type="EMBL" id="AB002369">
    <property type="protein sequence ID" value="BAA20826.2"/>
    <property type="status" value="ALT_INIT"/>
    <property type="molecule type" value="mRNA"/>
</dbReference>
<dbReference type="EMBL" id="CR456525">
    <property type="protein sequence ID" value="CAG30411.1"/>
    <property type="molecule type" value="mRNA"/>
</dbReference>
<dbReference type="EMBL" id="CH471095">
    <property type="protein sequence ID" value="EAW59852.1"/>
    <property type="molecule type" value="Genomic_DNA"/>
</dbReference>
<dbReference type="EMBL" id="CH471095">
    <property type="protein sequence ID" value="EAW59855.1"/>
    <property type="molecule type" value="Genomic_DNA"/>
</dbReference>
<dbReference type="EMBL" id="BC142713">
    <property type="protein sequence ID" value="AAI42714.1"/>
    <property type="molecule type" value="mRNA"/>
</dbReference>
<dbReference type="EMBL" id="BC148216">
    <property type="protein sequence ID" value="AAI48217.1"/>
    <property type="molecule type" value="mRNA"/>
</dbReference>
<dbReference type="EMBL" id="BC152455">
    <property type="protein sequence ID" value="AAI52456.1"/>
    <property type="molecule type" value="mRNA"/>
</dbReference>
<dbReference type="EMBL" id="AC003071">
    <property type="protein sequence ID" value="AAB83949.1"/>
    <property type="molecule type" value="Genomic_DNA"/>
</dbReference>
<dbReference type="EMBL" id="U58034">
    <property type="protein sequence ID" value="AAC79119.1"/>
    <property type="molecule type" value="Genomic_DNA"/>
</dbReference>
<dbReference type="CCDS" id="CCDS13870.1">
    <molecule id="Q13615-1"/>
</dbReference>
<dbReference type="CCDS" id="CCDS13871.1">
    <molecule id="Q13615-2"/>
</dbReference>
<dbReference type="CCDS" id="CCDS46682.1">
    <molecule id="Q13615-3"/>
</dbReference>
<dbReference type="RefSeq" id="NP_066576.1">
    <molecule id="Q13615-1"/>
    <property type="nucleotide sequence ID" value="NM_021090.4"/>
</dbReference>
<dbReference type="RefSeq" id="NP_694690.1">
    <molecule id="Q13615-2"/>
    <property type="nucleotide sequence ID" value="NM_153050.3"/>
</dbReference>
<dbReference type="RefSeq" id="NP_694691.1">
    <molecule id="Q13615-3"/>
    <property type="nucleotide sequence ID" value="NM_153051.3"/>
</dbReference>
<dbReference type="RefSeq" id="XP_016884521.1">
    <property type="nucleotide sequence ID" value="XM_017029032.1"/>
</dbReference>
<dbReference type="SMR" id="Q13615"/>
<dbReference type="BioGRID" id="114414">
    <property type="interactions" value="69"/>
</dbReference>
<dbReference type="FunCoup" id="Q13615">
    <property type="interactions" value="2460"/>
</dbReference>
<dbReference type="IntAct" id="Q13615">
    <property type="interactions" value="50"/>
</dbReference>
<dbReference type="MINT" id="Q13615"/>
<dbReference type="STRING" id="9606.ENSP00000384651"/>
<dbReference type="SwissLipids" id="SLP:000001134"/>
<dbReference type="DEPOD" id="MTMR3"/>
<dbReference type="GlyCosmos" id="Q13615">
    <property type="glycosylation" value="3 sites, 1 glycan"/>
</dbReference>
<dbReference type="GlyGen" id="Q13615">
    <property type="glycosylation" value="4 sites, 1 O-linked glycan (3 sites)"/>
</dbReference>
<dbReference type="iPTMnet" id="Q13615"/>
<dbReference type="PhosphoSitePlus" id="Q13615"/>
<dbReference type="BioMuta" id="MTMR3"/>
<dbReference type="DMDM" id="33112668"/>
<dbReference type="jPOST" id="Q13615"/>
<dbReference type="MassIVE" id="Q13615"/>
<dbReference type="PaxDb" id="9606-ENSP00000384651"/>
<dbReference type="PeptideAtlas" id="Q13615"/>
<dbReference type="ProteomicsDB" id="59601">
    <molecule id="Q13615-1"/>
</dbReference>
<dbReference type="ProteomicsDB" id="59602">
    <molecule id="Q13615-2"/>
</dbReference>
<dbReference type="ProteomicsDB" id="59603">
    <molecule id="Q13615-3"/>
</dbReference>
<dbReference type="Pumba" id="Q13615"/>
<dbReference type="Antibodypedia" id="35237">
    <property type="antibodies" value="65 antibodies from 20 providers"/>
</dbReference>
<dbReference type="DNASU" id="8897"/>
<dbReference type="Ensembl" id="ENST00000333027.7">
    <molecule id="Q13615-2"/>
    <property type="protein sequence ID" value="ENSP00000331649.3"/>
    <property type="gene ID" value="ENSG00000100330.16"/>
</dbReference>
<dbReference type="Ensembl" id="ENST00000351488.7">
    <molecule id="Q13615-3"/>
    <property type="protein sequence ID" value="ENSP00000307271.6"/>
    <property type="gene ID" value="ENSG00000100330.16"/>
</dbReference>
<dbReference type="Ensembl" id="ENST00000401950.7">
    <molecule id="Q13615-1"/>
    <property type="protein sequence ID" value="ENSP00000384651.3"/>
    <property type="gene ID" value="ENSG00000100330.16"/>
</dbReference>
<dbReference type="Ensembl" id="ENST00000406629.1">
    <molecule id="Q13615-2"/>
    <property type="protein sequence ID" value="ENSP00000384077.1"/>
    <property type="gene ID" value="ENSG00000100330.16"/>
</dbReference>
<dbReference type="GeneID" id="8897"/>
<dbReference type="KEGG" id="hsa:8897"/>
<dbReference type="MANE-Select" id="ENST00000401950.7">
    <property type="protein sequence ID" value="ENSP00000384651.3"/>
    <property type="RefSeq nucleotide sequence ID" value="NM_021090.4"/>
    <property type="RefSeq protein sequence ID" value="NP_066576.1"/>
</dbReference>
<dbReference type="UCSC" id="uc003agu.5">
    <molecule id="Q13615-1"/>
    <property type="organism name" value="human"/>
</dbReference>
<dbReference type="AGR" id="HGNC:7451"/>
<dbReference type="CTD" id="8897"/>
<dbReference type="DisGeNET" id="8897"/>
<dbReference type="GeneCards" id="MTMR3"/>
<dbReference type="HGNC" id="HGNC:7451">
    <property type="gene designation" value="MTMR3"/>
</dbReference>
<dbReference type="HPA" id="ENSG00000100330">
    <property type="expression patterns" value="Tissue enhanced (bone)"/>
</dbReference>
<dbReference type="MIM" id="603558">
    <property type="type" value="gene"/>
</dbReference>
<dbReference type="neXtProt" id="NX_Q13615"/>
<dbReference type="OpenTargets" id="ENSG00000100330"/>
<dbReference type="PharmGKB" id="PA31254"/>
<dbReference type="VEuPathDB" id="HostDB:ENSG00000100330"/>
<dbReference type="eggNOG" id="KOG4471">
    <property type="taxonomic scope" value="Eukaryota"/>
</dbReference>
<dbReference type="GeneTree" id="ENSGT00940000157272"/>
<dbReference type="HOGENOM" id="CLU_001839_2_2_1"/>
<dbReference type="InParanoid" id="Q13615"/>
<dbReference type="OMA" id="FNEAFLX"/>
<dbReference type="OrthoDB" id="271628at2759"/>
<dbReference type="PAN-GO" id="Q13615">
    <property type="GO annotations" value="7 GO annotations based on evolutionary models"/>
</dbReference>
<dbReference type="PhylomeDB" id="Q13615"/>
<dbReference type="TreeFam" id="TF315197"/>
<dbReference type="BioCyc" id="MetaCyc:HS02045-MONOMER"/>
<dbReference type="BRENDA" id="3.1.3.95">
    <property type="organism ID" value="2681"/>
</dbReference>
<dbReference type="PathwayCommons" id="Q13615"/>
<dbReference type="Reactome" id="R-HSA-1632852">
    <property type="pathway name" value="Macroautophagy"/>
</dbReference>
<dbReference type="Reactome" id="R-HSA-1660499">
    <property type="pathway name" value="Synthesis of PIPs at the plasma membrane"/>
</dbReference>
<dbReference type="SignaLink" id="Q13615"/>
<dbReference type="SIGNOR" id="Q13615"/>
<dbReference type="BioGRID-ORCS" id="8897">
    <property type="hits" value="26 hits in 1176 CRISPR screens"/>
</dbReference>
<dbReference type="ChiTaRS" id="MTMR3">
    <property type="organism name" value="human"/>
</dbReference>
<dbReference type="GeneWiki" id="MTMR3"/>
<dbReference type="GenomeRNAi" id="8897"/>
<dbReference type="Pharos" id="Q13615">
    <property type="development level" value="Tbio"/>
</dbReference>
<dbReference type="PRO" id="PR:Q13615"/>
<dbReference type="Proteomes" id="UP000005640">
    <property type="component" value="Chromosome 22"/>
</dbReference>
<dbReference type="RNAct" id="Q13615">
    <property type="molecule type" value="protein"/>
</dbReference>
<dbReference type="Bgee" id="ENSG00000100330">
    <property type="expression patterns" value="Expressed in oocyte and 197 other cell types or tissues"/>
</dbReference>
<dbReference type="ExpressionAtlas" id="Q13615">
    <property type="expression patterns" value="baseline and differential"/>
</dbReference>
<dbReference type="GO" id="GO:0005737">
    <property type="term" value="C:cytoplasm"/>
    <property type="evidence" value="ECO:0000314"/>
    <property type="project" value="UniProtKB"/>
</dbReference>
<dbReference type="GO" id="GO:0005829">
    <property type="term" value="C:cytosol"/>
    <property type="evidence" value="ECO:0000304"/>
    <property type="project" value="Reactome"/>
</dbReference>
<dbReference type="GO" id="GO:0016020">
    <property type="term" value="C:membrane"/>
    <property type="evidence" value="ECO:0000314"/>
    <property type="project" value="UniProtKB"/>
</dbReference>
<dbReference type="GO" id="GO:0060090">
    <property type="term" value="F:molecular adaptor activity"/>
    <property type="evidence" value="ECO:0000314"/>
    <property type="project" value="UniProtKB"/>
</dbReference>
<dbReference type="GO" id="GO:0052629">
    <property type="term" value="F:phosphatidylinositol-3,5-bisphosphate 3-phosphatase activity"/>
    <property type="evidence" value="ECO:0000314"/>
    <property type="project" value="UniProtKB"/>
</dbReference>
<dbReference type="GO" id="GO:0004438">
    <property type="term" value="F:phosphatidylinositol-3-phosphate phosphatase activity"/>
    <property type="evidence" value="ECO:0000314"/>
    <property type="project" value="UniProtKB"/>
</dbReference>
<dbReference type="GO" id="GO:0019903">
    <property type="term" value="F:protein phosphatase binding"/>
    <property type="evidence" value="ECO:0000353"/>
    <property type="project" value="UniProtKB"/>
</dbReference>
<dbReference type="GO" id="GO:0004722">
    <property type="term" value="F:protein serine/threonine phosphatase activity"/>
    <property type="evidence" value="ECO:0000314"/>
    <property type="project" value="UniProtKB"/>
</dbReference>
<dbReference type="GO" id="GO:0004725">
    <property type="term" value="F:protein tyrosine phosphatase activity"/>
    <property type="evidence" value="ECO:0000314"/>
    <property type="project" value="UniProtKB"/>
</dbReference>
<dbReference type="GO" id="GO:0008138">
    <property type="term" value="F:protein tyrosine/serine/threonine phosphatase activity"/>
    <property type="evidence" value="ECO:0000314"/>
    <property type="project" value="FlyBase"/>
</dbReference>
<dbReference type="GO" id="GO:0008270">
    <property type="term" value="F:zinc ion binding"/>
    <property type="evidence" value="ECO:0007669"/>
    <property type="project" value="UniProtKB-KW"/>
</dbReference>
<dbReference type="GO" id="GO:0042149">
    <property type="term" value="P:cellular response to glucose starvation"/>
    <property type="evidence" value="ECO:0000315"/>
    <property type="project" value="ParkinsonsUK-UCL"/>
</dbReference>
<dbReference type="GO" id="GO:0016236">
    <property type="term" value="P:macroautophagy"/>
    <property type="evidence" value="ECO:0000304"/>
    <property type="project" value="Reactome"/>
</dbReference>
<dbReference type="GO" id="GO:0061952">
    <property type="term" value="P:midbody abscission"/>
    <property type="evidence" value="ECO:0000315"/>
    <property type="project" value="UniProtKB"/>
</dbReference>
<dbReference type="GO" id="GO:1904562">
    <property type="term" value="P:phosphatidylinositol 5-phosphate metabolic process"/>
    <property type="evidence" value="ECO:0000314"/>
    <property type="project" value="ParkinsonsUK-UCL"/>
</dbReference>
<dbReference type="GO" id="GO:0006661">
    <property type="term" value="P:phosphatidylinositol biosynthetic process"/>
    <property type="evidence" value="ECO:0000304"/>
    <property type="project" value="Reactome"/>
</dbReference>
<dbReference type="GO" id="GO:0046856">
    <property type="term" value="P:phosphatidylinositol dephosphorylation"/>
    <property type="evidence" value="ECO:0000314"/>
    <property type="project" value="UniProtKB"/>
</dbReference>
<dbReference type="GO" id="GO:0006470">
    <property type="term" value="P:protein dephosphorylation"/>
    <property type="evidence" value="ECO:0000314"/>
    <property type="project" value="UniProtKB"/>
</dbReference>
<dbReference type="GO" id="GO:2000785">
    <property type="term" value="P:regulation of autophagosome assembly"/>
    <property type="evidence" value="ECO:0000315"/>
    <property type="project" value="ParkinsonsUK-UCL"/>
</dbReference>
<dbReference type="GO" id="GO:0060304">
    <property type="term" value="P:regulation of phosphatidylinositol dephosphorylation"/>
    <property type="evidence" value="ECO:0000314"/>
    <property type="project" value="UniProtKB"/>
</dbReference>
<dbReference type="CDD" id="cd15732">
    <property type="entry name" value="FYVE_MTMR3"/>
    <property type="match status" value="1"/>
</dbReference>
<dbReference type="CDD" id="cd13341">
    <property type="entry name" value="PH-GRAM_MTMR3"/>
    <property type="match status" value="1"/>
</dbReference>
<dbReference type="CDD" id="cd14586">
    <property type="entry name" value="PTP-MTMR3"/>
    <property type="match status" value="1"/>
</dbReference>
<dbReference type="FunFam" id="3.30.40.10:FF:000073">
    <property type="entry name" value="myotubularin-related protein 4 isoform X2"/>
    <property type="match status" value="1"/>
</dbReference>
<dbReference type="Gene3D" id="3.90.190.10">
    <property type="entry name" value="Protein tyrosine phosphatase superfamily"/>
    <property type="match status" value="1"/>
</dbReference>
<dbReference type="Gene3D" id="3.30.40.10">
    <property type="entry name" value="Zinc/RING finger domain, C3HC4 (zinc finger)"/>
    <property type="match status" value="1"/>
</dbReference>
<dbReference type="InterPro" id="IPR035888">
    <property type="entry name" value="MTMR3_PH-GRAM"/>
</dbReference>
<dbReference type="InterPro" id="IPR046352">
    <property type="entry name" value="MTMR3_PTP"/>
</dbReference>
<dbReference type="InterPro" id="IPR030564">
    <property type="entry name" value="Myotubularin"/>
</dbReference>
<dbReference type="InterPro" id="IPR010569">
    <property type="entry name" value="Myotubularin-like_Pase_dom"/>
</dbReference>
<dbReference type="InterPro" id="IPR029021">
    <property type="entry name" value="Prot-tyrosine_phosphatase-like"/>
</dbReference>
<dbReference type="InterPro" id="IPR016130">
    <property type="entry name" value="Tyr_Pase_AS"/>
</dbReference>
<dbReference type="InterPro" id="IPR003595">
    <property type="entry name" value="Tyr_Pase_cat"/>
</dbReference>
<dbReference type="InterPro" id="IPR000306">
    <property type="entry name" value="Znf_FYVE"/>
</dbReference>
<dbReference type="InterPro" id="IPR017455">
    <property type="entry name" value="Znf_FYVE-rel"/>
</dbReference>
<dbReference type="InterPro" id="IPR011011">
    <property type="entry name" value="Znf_FYVE_PHD"/>
</dbReference>
<dbReference type="InterPro" id="IPR013083">
    <property type="entry name" value="Znf_RING/FYVE/PHD"/>
</dbReference>
<dbReference type="PANTHER" id="PTHR10807">
    <property type="entry name" value="MYOTUBULARIN-RELATED"/>
    <property type="match status" value="1"/>
</dbReference>
<dbReference type="PANTHER" id="PTHR10807:SF66">
    <property type="entry name" value="MYOTUBULARIN-RELATED PROTEIN 3"/>
    <property type="match status" value="1"/>
</dbReference>
<dbReference type="Pfam" id="PF01363">
    <property type="entry name" value="FYVE"/>
    <property type="match status" value="1"/>
</dbReference>
<dbReference type="Pfam" id="PF06602">
    <property type="entry name" value="Myotub-related"/>
    <property type="match status" value="1"/>
</dbReference>
<dbReference type="SMART" id="SM00064">
    <property type="entry name" value="FYVE"/>
    <property type="match status" value="1"/>
</dbReference>
<dbReference type="SMART" id="SM00404">
    <property type="entry name" value="PTPc_motif"/>
    <property type="match status" value="1"/>
</dbReference>
<dbReference type="SUPFAM" id="SSF52799">
    <property type="entry name" value="(Phosphotyrosine protein) phosphatases II"/>
    <property type="match status" value="1"/>
</dbReference>
<dbReference type="SUPFAM" id="SSF57903">
    <property type="entry name" value="FYVE/PHD zinc finger"/>
    <property type="match status" value="1"/>
</dbReference>
<dbReference type="SUPFAM" id="SSF50729">
    <property type="entry name" value="PH domain-like"/>
    <property type="match status" value="1"/>
</dbReference>
<dbReference type="PROSITE" id="PS51339">
    <property type="entry name" value="PPASE_MYOTUBULARIN"/>
    <property type="match status" value="1"/>
</dbReference>
<dbReference type="PROSITE" id="PS00383">
    <property type="entry name" value="TYR_PHOSPHATASE_1"/>
    <property type="match status" value="1"/>
</dbReference>
<dbReference type="PROSITE" id="PS50178">
    <property type="entry name" value="ZF_FYVE"/>
    <property type="match status" value="1"/>
</dbReference>
<accession>Q13615</accession>
<accession>A5PL26</accession>
<accession>A7MD32</accession>
<accession>Q9NYN5</accession>
<accession>Q9NYN6</accession>
<accession>Q9UDX6</accession>
<accession>Q9UEG3</accession>
<sequence length="1198" mass="133619">MDEETRHSLECIQANQIFPRKQLIREDENLQVPFLELHGESTEFVGRAEDAIIALSNYRLHIKFKESLVNVPLQLIESVECRDIFQLHLTCKDCKVIRCQFSTFEQCQEWLKRLNNAIRPPAKIEDLFSFAYHAWCMEVYASEKEQHGDLCRPGEHVTSRFKNEVERMGFDMNNAWRISNINEKYKLCGSYPQELIVPAWITDKELESVSSFRSWKRIPAVIYRHQSNGAVIARCGQPEVSWWGWRNADDEHLVQSVAKACASDSRSSGSKLSTRNTSRDFPNGGDLSDVEFDSSLSNASGAESLAIQPQKLLILDARSYAAAVANRAKGGGCECPEYYPNCEVVFMGMANIHSIRRSFQSLRLLCTQMPDPGNWLSALESTKWLHHLSVLLKSALLVVHAVDQDQRPVLVHCSDGWDRTPQIVALAKLLLDPYYRTIEGFQVLVEMEWLDFGHKFADRCGHGENSDDLNERCPVFLQWLDCVHQLQRQFPCSFEFNEAFLVKLVQHTYSCLFGTFLCNNAKERGEKHTQERTCSVWSLLRAGNKAFKNLLYSSQSEAVLYPVCHVRNLMLWSAVYLPCPSPTTPVDDSCAPYPAPGTSPDDPPLSRLPKTRSYDNLTTACDNTVPLASRRCSDPSLNEKWQEHRRSLELSSLAGPGEDPLSADSLGKPTRVPGGAELSVAAGVAEGQMENILQEATKEESGVEEPAHRAGIEIQEGKEDPLLEKESRRKTPEASAIGLHQDPELGDAALRSHLDMSWPLFSQGISEQQSGLSVLLSSLQVPPRGEDSLEVPVEQFRIEEIAEGREEAVLPIPVDAKVGYGTSQSCSLLPSQVPFETRGPNVDSSTDMLVEDKVKSVSGPQGHHRSCLVNSGKDRLPQTMEPSPSETSLVERPQVGSVVHRTSLGSTLSLTRSPCALPLAECKEGLVCNGAPETENRASEQPPGLSTLQMYPTPNGHCANGEAGRSKDSLSRQLSAMSCSSAHLHSRNLHHKWLHSHSGRPSATSSPDQPSRSHLDDDGMSVYTDTIQQRLRQIESGHQQEVETLKKQVQELKSRLESQYLTSSLHFNGDFGDEVTSIPDSESNLDQNCLSRCSTEIFSEASWEQVDKQDTEMTRWLPDHLAAHCYACDSAFWLASRKHHCRNCGNVFCSSCCNQKVPVPSQQLFEPSRVCKSCYSSLHPTSSSIDLELDKPIAATSN</sequence>
<comment type="function">
    <text evidence="8 9 10 11 13">Lipid phosphatase that specifically dephosphorylates the D-3 position of phosphatidylinositol 3-phosphate and phosphatidylinositol 3,5-bisphosphate, generating phosphatidylinositol and phosphatidylinositol 5-phosphate (PubMed:10733931, PubMed:11302699, PubMed:11676921, PubMed:12646134). Decreases the levels of phosphatidylinositol 3-phosphate, a phospholipid found in cell membranes where it acts as key regulator of both cell signaling and intracellular membrane traffic (PubMed:11302699, PubMed:11676921, PubMed:12646134). Could also have a molecular sequestering/adapter activity and regulate biological processes independently of its phosphatase activity. It includes the regulation of midbody abscission during mitotic cytokinesis (PubMed:25659891).</text>
</comment>
<comment type="catalytic activity">
    <reaction evidence="10">
        <text>a 1,2-diacyl-sn-glycero-3-phospho-(1D-myo-inositol-3,5-bisphosphate) + H2O = a 1,2-diacyl-sn-glycero-3-phospho-(1D-myo-inositol-5-phosphate) + phosphate</text>
        <dbReference type="Rhea" id="RHEA:39019"/>
        <dbReference type="ChEBI" id="CHEBI:15377"/>
        <dbReference type="ChEBI" id="CHEBI:43474"/>
        <dbReference type="ChEBI" id="CHEBI:57795"/>
        <dbReference type="ChEBI" id="CHEBI:57923"/>
        <dbReference type="EC" id="3.1.3.95"/>
    </reaction>
</comment>
<comment type="catalytic activity">
    <reaction evidence="10">
        <text>a 1,2-diacyl-sn-glycero-3-phospho-(1D-myo-inositol-3-phosphate) + H2O = a 1,2-diacyl-sn-glycero-3-phospho-(1D-myo-inositol) + phosphate</text>
        <dbReference type="Rhea" id="RHEA:12316"/>
        <dbReference type="ChEBI" id="CHEBI:15377"/>
        <dbReference type="ChEBI" id="CHEBI:43474"/>
        <dbReference type="ChEBI" id="CHEBI:57880"/>
        <dbReference type="ChEBI" id="CHEBI:58088"/>
    </reaction>
</comment>
<comment type="catalytic activity">
    <reaction evidence="10">
        <text>1,2-dihexadecanoyl-sn-glycero-3-phospho-(1D-myo-inositol-3-phosphate) + H2O = 1,2-dihexadecanoyl-sn-glycero-3-phospho-(1D-myo-inositol) + phosphate</text>
        <dbReference type="Rhea" id="RHEA:45640"/>
        <dbReference type="ChEBI" id="CHEBI:15377"/>
        <dbReference type="ChEBI" id="CHEBI:43474"/>
        <dbReference type="ChEBI" id="CHEBI:72835"/>
        <dbReference type="ChEBI" id="CHEBI:78995"/>
    </reaction>
</comment>
<comment type="catalytic activity">
    <reaction evidence="11">
        <text>1,2-dioctanoyl-sn-glycero-3-phospho-(1-D-myo-inositol-3-phosphate) + H2O = 1,2-dioctanoyl-sn-glycero-3-phospho-(1D-myo-inositol) + phosphate</text>
        <dbReference type="Rhea" id="RHEA:42328"/>
        <dbReference type="ChEBI" id="CHEBI:15377"/>
        <dbReference type="ChEBI" id="CHEBI:43474"/>
        <dbReference type="ChEBI" id="CHEBI:65221"/>
        <dbReference type="ChEBI" id="CHEBI:78934"/>
    </reaction>
</comment>
<comment type="catalytic activity">
    <reaction evidence="10">
        <text>1,2-dihexadecanoyl-sn-glycero-3-phospho-(1D-myo-inositol-3,5-phosphate) + H2O = 1,2-dihexadecanoyl-sn-glycero-3-phospho-(1D-myo-inositol-5-phosphate) + phosphate</text>
        <dbReference type="Rhea" id="RHEA:45636"/>
        <dbReference type="ChEBI" id="CHEBI:15377"/>
        <dbReference type="ChEBI" id="CHEBI:43474"/>
        <dbReference type="ChEBI" id="CHEBI:78994"/>
        <dbReference type="ChEBI" id="CHEBI:84968"/>
    </reaction>
</comment>
<comment type="subunit">
    <text evidence="13">Forms heterodimers with MTMR4 that recruit both CEP55 and PLK1; occurs during early mitosis, regulates the phosphorylation of CEP55 by PLK1 and its recruitment to the midbody where it mediates cell abscission.</text>
</comment>
<comment type="interaction">
    <interactant intactId="EBI-371938">
        <id>Q13615</id>
    </interactant>
    <interactant intactId="EBI-371876">
        <id>Q9NQT4</id>
        <label>EXOSC5</label>
    </interactant>
    <organismsDiffer>false</organismsDiffer>
    <experiments>3</experiments>
</comment>
<comment type="interaction">
    <interactant intactId="EBI-371938">
        <id>Q13615</id>
    </interactant>
    <interactant intactId="EBI-2341787">
        <id>Q17RB8</id>
        <label>LONRF1</label>
    </interactant>
    <organismsDiffer>false</organismsDiffer>
    <experiments>3</experiments>
</comment>
<comment type="interaction">
    <interactant intactId="EBI-371938">
        <id>Q13615</id>
    </interactant>
    <interactant intactId="EBI-359260">
        <id>P42345</id>
        <label>MTOR</label>
    </interactant>
    <organismsDiffer>false</organismsDiffer>
    <experiments>3</experiments>
</comment>
<comment type="interaction">
    <interactant intactId="EBI-371938">
        <id>Q13615</id>
    </interactant>
    <interactant intactId="EBI-1567928">
        <id>Q8N122</id>
        <label>RPTOR</label>
    </interactant>
    <organismsDiffer>false</organismsDiffer>
    <experiments>3</experiments>
</comment>
<comment type="subcellular location">
    <subcellularLocation>
        <location evidence="8 10">Cytoplasm</location>
        <location evidence="8 10">Cytosol</location>
    </subcellularLocation>
    <subcellularLocation>
        <location evidence="8 10">Membrane</location>
        <topology evidence="8 10">Peripheral membrane protein</topology>
    </subcellularLocation>
</comment>
<comment type="alternative products">
    <event type="alternative splicing"/>
    <isoform>
        <id>Q13615-1</id>
        <name>B</name>
        <name>FYVE-DSP1b</name>
        <sequence type="displayed"/>
    </isoform>
    <isoform>
        <id>Q13615-2</id>
        <name>A</name>
        <name>FYVE-DSP1a</name>
        <sequence type="described" ref="VSP_007781 VSP_007782"/>
    </isoform>
    <isoform>
        <id>Q13615-3</id>
        <name>C</name>
        <name>FYVE-DSP1c</name>
        <sequence type="described" ref="VSP_007781"/>
    </isoform>
</comment>
<comment type="domain">
    <text evidence="13">The coiled coil domain mediates the interaction between MTMR3 and MTMR4. It is essential to bring together CEP55 and PLK1 during mitotic abscission.</text>
</comment>
<comment type="PTM">
    <text evidence="13">Phosphorylated by CDK1 during mitosis.</text>
</comment>
<comment type="similarity">
    <text evidence="16">Belongs to the protein-tyrosine phosphatase family. Non-receptor class myotubularin subfamily.</text>
</comment>
<comment type="caution">
    <text evidence="8 9 10 11">A weak protein phosphatase activity was also detected in vitro and MTMR3 considered a dual specificity protein phosphatase (PubMed:10733931). However, experimental evidences suggest MTMR3 is a specific phosphoinositide 3-phosphatases (PubMed:11302699, PubMed:11676921, PubMed:12646134).</text>
</comment>
<comment type="sequence caution" evidence="16">
    <conflict type="erroneous initiation">
        <sequence resource="EMBL-CDS" id="BAA20826"/>
    </conflict>
</comment>
<keyword id="KW-0025">Alternative splicing</keyword>
<keyword id="KW-0175">Coiled coil</keyword>
<keyword id="KW-0963">Cytoplasm</keyword>
<keyword id="KW-0378">Hydrolase</keyword>
<keyword id="KW-0443">Lipid metabolism</keyword>
<keyword id="KW-0472">Membrane</keyword>
<keyword id="KW-0479">Metal-binding</keyword>
<keyword id="KW-0597">Phosphoprotein</keyword>
<keyword id="KW-1267">Proteomics identification</keyword>
<keyword id="KW-1185">Reference proteome</keyword>
<keyword id="KW-0862">Zinc</keyword>
<keyword id="KW-0863">Zinc-finger</keyword>
<reference key="1">
    <citation type="journal article" date="2000" name="Biochem. Biophys. Res. Commun.">
        <title>FYVE-DSP1, a dual-specificity protein phosphatase containing an FYVE domain.</title>
        <authorList>
            <person name="Zhao R."/>
            <person name="Qi Y."/>
            <person name="Zhao Z.J."/>
        </authorList>
    </citation>
    <scope>NUCLEOTIDE SEQUENCE (ISOFORMS A; B AND C)</scope>
    <scope>CAUTION</scope>
    <scope>SUBCELLULAR LOCATION</scope>
</reference>
<reference key="2">
    <citation type="journal article" date="1997" name="DNA Res.">
        <title>Prediction of the coding sequences of unidentified human genes. VII. The complete sequences of 100 new cDNA clones from brain which can code for large proteins in vitro.</title>
        <authorList>
            <person name="Nagase T."/>
            <person name="Ishikawa K."/>
            <person name="Nakajima D."/>
            <person name="Ohira M."/>
            <person name="Seki N."/>
            <person name="Miyajima N."/>
            <person name="Tanaka A."/>
            <person name="Kotani H."/>
            <person name="Nomura N."/>
            <person name="Ohara O."/>
        </authorList>
    </citation>
    <scope>NUCLEOTIDE SEQUENCE [LARGE SCALE MRNA] (ISOFORM B)</scope>
    <source>
        <tissue>Brain</tissue>
    </source>
</reference>
<reference key="3">
    <citation type="journal article" date="2004" name="Genome Biol.">
        <title>A genome annotation-driven approach to cloning the human ORFeome.</title>
        <authorList>
            <person name="Collins J.E."/>
            <person name="Wright C.L."/>
            <person name="Edwards C.A."/>
            <person name="Davis M.P."/>
            <person name="Grinham J.A."/>
            <person name="Cole C.G."/>
            <person name="Goward M.E."/>
            <person name="Aguado B."/>
            <person name="Mallya M."/>
            <person name="Mokrab Y."/>
            <person name="Huckle E.J."/>
            <person name="Beare D.M."/>
            <person name="Dunham I."/>
        </authorList>
    </citation>
    <scope>NUCLEOTIDE SEQUENCE [LARGE SCALE MRNA] (ISOFORM B)</scope>
</reference>
<reference key="4">
    <citation type="journal article" date="1999" name="Nature">
        <title>The DNA sequence of human chromosome 22.</title>
        <authorList>
            <person name="Dunham I."/>
            <person name="Hunt A.R."/>
            <person name="Collins J.E."/>
            <person name="Bruskiewich R."/>
            <person name="Beare D.M."/>
            <person name="Clamp M."/>
            <person name="Smink L.J."/>
            <person name="Ainscough R."/>
            <person name="Almeida J.P."/>
            <person name="Babbage A.K."/>
            <person name="Bagguley C."/>
            <person name="Bailey J."/>
            <person name="Barlow K.F."/>
            <person name="Bates K.N."/>
            <person name="Beasley O.P."/>
            <person name="Bird C.P."/>
            <person name="Blakey S.E."/>
            <person name="Bridgeman A.M."/>
            <person name="Buck D."/>
            <person name="Burgess J."/>
            <person name="Burrill W.D."/>
            <person name="Burton J."/>
            <person name="Carder C."/>
            <person name="Carter N.P."/>
            <person name="Chen Y."/>
            <person name="Clark G."/>
            <person name="Clegg S.M."/>
            <person name="Cobley V.E."/>
            <person name="Cole C.G."/>
            <person name="Collier R.E."/>
            <person name="Connor R."/>
            <person name="Conroy D."/>
            <person name="Corby N.R."/>
            <person name="Coville G.J."/>
            <person name="Cox A.V."/>
            <person name="Davis J."/>
            <person name="Dawson E."/>
            <person name="Dhami P.D."/>
            <person name="Dockree C."/>
            <person name="Dodsworth S.J."/>
            <person name="Durbin R.M."/>
            <person name="Ellington A.G."/>
            <person name="Evans K.L."/>
            <person name="Fey J.M."/>
            <person name="Fleming K."/>
            <person name="French L."/>
            <person name="Garner A.A."/>
            <person name="Gilbert J.G.R."/>
            <person name="Goward M.E."/>
            <person name="Grafham D.V."/>
            <person name="Griffiths M.N.D."/>
            <person name="Hall C."/>
            <person name="Hall R.E."/>
            <person name="Hall-Tamlyn G."/>
            <person name="Heathcott R.W."/>
            <person name="Ho S."/>
            <person name="Holmes S."/>
            <person name="Hunt S.E."/>
            <person name="Jones M.C."/>
            <person name="Kershaw J."/>
            <person name="Kimberley A.M."/>
            <person name="King A."/>
            <person name="Laird G.K."/>
            <person name="Langford C.F."/>
            <person name="Leversha M.A."/>
            <person name="Lloyd C."/>
            <person name="Lloyd D.M."/>
            <person name="Martyn I.D."/>
            <person name="Mashreghi-Mohammadi M."/>
            <person name="Matthews L.H."/>
            <person name="Mccann O.T."/>
            <person name="Mcclay J."/>
            <person name="Mclaren S."/>
            <person name="McMurray A.A."/>
            <person name="Milne S.A."/>
            <person name="Mortimore B.J."/>
            <person name="Odell C.N."/>
            <person name="Pavitt R."/>
            <person name="Pearce A.V."/>
            <person name="Pearson D."/>
            <person name="Phillimore B.J.C.T."/>
            <person name="Phillips S.H."/>
            <person name="Plumb R.W."/>
            <person name="Ramsay H."/>
            <person name="Ramsey Y."/>
            <person name="Rogers L."/>
            <person name="Ross M.T."/>
            <person name="Scott C.E."/>
            <person name="Sehra H.K."/>
            <person name="Skuce C.D."/>
            <person name="Smalley S."/>
            <person name="Smith M.L."/>
            <person name="Soderlund C."/>
            <person name="Spragon L."/>
            <person name="Steward C.A."/>
            <person name="Sulston J.E."/>
            <person name="Swann R.M."/>
            <person name="Vaudin M."/>
            <person name="Wall M."/>
            <person name="Wallis J.M."/>
            <person name="Whiteley M.N."/>
            <person name="Willey D.L."/>
            <person name="Williams L."/>
            <person name="Williams S.A."/>
            <person name="Williamson H."/>
            <person name="Wilmer T.E."/>
            <person name="Wilming L."/>
            <person name="Wright C.L."/>
            <person name="Hubbard T."/>
            <person name="Bentley D.R."/>
            <person name="Beck S."/>
            <person name="Rogers J."/>
            <person name="Shimizu N."/>
            <person name="Minoshima S."/>
            <person name="Kawasaki K."/>
            <person name="Sasaki T."/>
            <person name="Asakawa S."/>
            <person name="Kudoh J."/>
            <person name="Shintani A."/>
            <person name="Shibuya K."/>
            <person name="Yoshizaki Y."/>
            <person name="Aoki N."/>
            <person name="Mitsuyama S."/>
            <person name="Roe B.A."/>
            <person name="Chen F."/>
            <person name="Chu L."/>
            <person name="Crabtree J."/>
            <person name="Deschamps S."/>
            <person name="Do A."/>
            <person name="Do T."/>
            <person name="Dorman A."/>
            <person name="Fang F."/>
            <person name="Fu Y."/>
            <person name="Hu P."/>
            <person name="Hua A."/>
            <person name="Kenton S."/>
            <person name="Lai H."/>
            <person name="Lao H.I."/>
            <person name="Lewis J."/>
            <person name="Lewis S."/>
            <person name="Lin S.-P."/>
            <person name="Loh P."/>
            <person name="Malaj E."/>
            <person name="Nguyen T."/>
            <person name="Pan H."/>
            <person name="Phan S."/>
            <person name="Qi S."/>
            <person name="Qian Y."/>
            <person name="Ray L."/>
            <person name="Ren Q."/>
            <person name="Shaull S."/>
            <person name="Sloan D."/>
            <person name="Song L."/>
            <person name="Wang Q."/>
            <person name="Wang Y."/>
            <person name="Wang Z."/>
            <person name="White J."/>
            <person name="Willingham D."/>
            <person name="Wu H."/>
            <person name="Yao Z."/>
            <person name="Zhan M."/>
            <person name="Zhang G."/>
            <person name="Chissoe S."/>
            <person name="Murray J."/>
            <person name="Miller N."/>
            <person name="Minx P."/>
            <person name="Fulton R."/>
            <person name="Johnson D."/>
            <person name="Bemis G."/>
            <person name="Bentley D."/>
            <person name="Bradshaw H."/>
            <person name="Bourne S."/>
            <person name="Cordes M."/>
            <person name="Du Z."/>
            <person name="Fulton L."/>
            <person name="Goela D."/>
            <person name="Graves T."/>
            <person name="Hawkins J."/>
            <person name="Hinds K."/>
            <person name="Kemp K."/>
            <person name="Latreille P."/>
            <person name="Layman D."/>
            <person name="Ozersky P."/>
            <person name="Rohlfing T."/>
            <person name="Scheet P."/>
            <person name="Walker C."/>
            <person name="Wamsley A."/>
            <person name="Wohldmann P."/>
            <person name="Pepin K."/>
            <person name="Nelson J."/>
            <person name="Korf I."/>
            <person name="Bedell J.A."/>
            <person name="Hillier L.W."/>
            <person name="Mardis E."/>
            <person name="Waterston R."/>
            <person name="Wilson R."/>
            <person name="Emanuel B.S."/>
            <person name="Shaikh T."/>
            <person name="Kurahashi H."/>
            <person name="Saitta S."/>
            <person name="Budarf M.L."/>
            <person name="McDermid H.E."/>
            <person name="Johnson A."/>
            <person name="Wong A.C.C."/>
            <person name="Morrow B.E."/>
            <person name="Edelmann L."/>
            <person name="Kim U.J."/>
            <person name="Shizuya H."/>
            <person name="Simon M.I."/>
            <person name="Dumanski J.P."/>
            <person name="Peyrard M."/>
            <person name="Kedra D."/>
            <person name="Seroussi E."/>
            <person name="Fransson I."/>
            <person name="Tapia I."/>
            <person name="Bruder C.E."/>
            <person name="O'Brien K.P."/>
            <person name="Wilkinson P."/>
            <person name="Bodenteich A."/>
            <person name="Hartman K."/>
            <person name="Hu X."/>
            <person name="Khan A.S."/>
            <person name="Lane L."/>
            <person name="Tilahun Y."/>
            <person name="Wright H."/>
        </authorList>
    </citation>
    <scope>NUCLEOTIDE SEQUENCE [LARGE SCALE GENOMIC DNA]</scope>
</reference>
<reference key="5">
    <citation type="submission" date="2005-07" db="EMBL/GenBank/DDBJ databases">
        <authorList>
            <person name="Mural R.J."/>
            <person name="Istrail S."/>
            <person name="Sutton G.G."/>
            <person name="Florea L."/>
            <person name="Halpern A.L."/>
            <person name="Mobarry C.M."/>
            <person name="Lippert R."/>
            <person name="Walenz B."/>
            <person name="Shatkay H."/>
            <person name="Dew I."/>
            <person name="Miller J.R."/>
            <person name="Flanigan M.J."/>
            <person name="Edwards N.J."/>
            <person name="Bolanos R."/>
            <person name="Fasulo D."/>
            <person name="Halldorsson B.V."/>
            <person name="Hannenhalli S."/>
            <person name="Turner R."/>
            <person name="Yooseph S."/>
            <person name="Lu F."/>
            <person name="Nusskern D.R."/>
            <person name="Shue B.C."/>
            <person name="Zheng X.H."/>
            <person name="Zhong F."/>
            <person name="Delcher A.L."/>
            <person name="Huson D.H."/>
            <person name="Kravitz S.A."/>
            <person name="Mouchard L."/>
            <person name="Reinert K."/>
            <person name="Remington K.A."/>
            <person name="Clark A.G."/>
            <person name="Waterman M.S."/>
            <person name="Eichler E.E."/>
            <person name="Adams M.D."/>
            <person name="Hunkapiller M.W."/>
            <person name="Myers E.W."/>
            <person name="Venter J.C."/>
        </authorList>
    </citation>
    <scope>NUCLEOTIDE SEQUENCE [LARGE SCALE GENOMIC DNA]</scope>
</reference>
<reference key="6">
    <citation type="journal article" date="2004" name="Genome Res.">
        <title>The status, quality, and expansion of the NIH full-length cDNA project: the Mammalian Gene Collection (MGC).</title>
        <authorList>
            <consortium name="The MGC Project Team"/>
        </authorList>
    </citation>
    <scope>NUCLEOTIDE SEQUENCE [LARGE SCALE MRNA] (ISOFORMS B AND C)</scope>
</reference>
<reference key="7">
    <citation type="journal article" date="1998" name="Hum. Mol. Genet.">
        <title>Characterization of the myotubularin dual specificity phosphatase gene family from yeast to human.</title>
        <authorList>
            <person name="Laporte J."/>
            <person name="Blondeau F."/>
            <person name="Buj-Bello A."/>
            <person name="Tentler D."/>
            <person name="Kretz C."/>
            <person name="Dahl N."/>
            <person name="Mandel J.-L."/>
        </authorList>
    </citation>
    <scope>NUCLEOTIDE SEQUENCE OF 374-578</scope>
</reference>
<reference key="8">
    <citation type="journal article" date="1996" name="Nat. Genet.">
        <title>A gene mutated in X-linked myotubular myopathy defines a new putative tyrosine phosphatase family conserved in yeast.</title>
        <authorList>
            <person name="Laporte J."/>
            <person name="Hu L.-J."/>
            <person name="Kretz C."/>
            <person name="Mandel J.-L."/>
            <person name="Kioschis P."/>
            <person name="Coy J."/>
            <person name="Klauck S.M."/>
            <person name="Poutska A."/>
            <person name="Dahl N."/>
        </authorList>
    </citation>
    <scope>NUCLEOTIDE SEQUENCE [GENOMIC DNA] OF 381-463</scope>
</reference>
<reference key="9">
    <citation type="journal article" date="2001" name="Exp. Cell Res.">
        <title>FYVE-DSP2, a FYVE domain-containing dual specificity protein phosphatase that dephosphorylates phosphatidylinositol 3-phosphate.</title>
        <authorList>
            <person name="Zhao R."/>
            <person name="Qi Y."/>
            <person name="Chen J."/>
            <person name="Zhao Z.J."/>
        </authorList>
    </citation>
    <scope>FUNCTION</scope>
    <scope>CATALYTIC ACTIVITY</scope>
    <scope>CAUTION</scope>
</reference>
<reference key="10">
    <citation type="journal article" date="2001" name="Curr. Biol.">
        <title>Characterization of MTMR3. an inositol lipid 3-phosphatase with novel substrate specificity.</title>
        <authorList>
            <person name="Walker D.M."/>
            <person name="Urbe S."/>
            <person name="Dove S.K."/>
            <person name="Tenza D."/>
            <person name="Raposo G."/>
            <person name="Clague M.J."/>
        </authorList>
    </citation>
    <scope>FUNCTION</scope>
    <scope>MUTAGENESIS OF CYS-413</scope>
    <scope>CATALYTIC ACTIVITY</scope>
    <scope>SUBCELLULAR LOCATION</scope>
    <scope>TOPOLOGY</scope>
    <scope>CAUTION</scope>
</reference>
<reference key="11">
    <citation type="journal article" date="2003" name="Curr. Biol.">
        <title>Phosphatidylinositol-5-phosphate activation and conserved substrate specificity of the myotubularin phosphatidylinositol 3-phosphatases.</title>
        <authorList>
            <person name="Schaletzky J."/>
            <person name="Dove S.K."/>
            <person name="Short B."/>
            <person name="Lorenzo O."/>
            <person name="Clague M.J."/>
            <person name="Barr F.A."/>
        </authorList>
    </citation>
    <scope>FUNCTION</scope>
    <scope>CATALYTIC ACTIVITY</scope>
    <scope>CAUTION</scope>
</reference>
<reference key="12">
    <citation type="journal article" date="2008" name="J. Proteome Res.">
        <title>Combining protein-based IMAC, peptide-based IMAC, and MudPIT for efficient phosphoproteomic analysis.</title>
        <authorList>
            <person name="Cantin G.T."/>
            <person name="Yi W."/>
            <person name="Lu B."/>
            <person name="Park S.K."/>
            <person name="Xu T."/>
            <person name="Lee J.-D."/>
            <person name="Yates J.R. III"/>
        </authorList>
    </citation>
    <scope>PHOSPHORYLATION [LARGE SCALE ANALYSIS] AT SER-647</scope>
    <scope>IDENTIFICATION BY MASS SPECTROMETRY [LARGE SCALE ANALYSIS]</scope>
    <source>
        <tissue>Cervix carcinoma</tissue>
    </source>
</reference>
<reference key="13">
    <citation type="journal article" date="2008" name="Proc. Natl. Acad. Sci. U.S.A.">
        <title>A quantitative atlas of mitotic phosphorylation.</title>
        <authorList>
            <person name="Dephoure N."/>
            <person name="Zhou C."/>
            <person name="Villen J."/>
            <person name="Beausoleil S.A."/>
            <person name="Bakalarski C.E."/>
            <person name="Elledge S.J."/>
            <person name="Gygi S.P."/>
        </authorList>
    </citation>
    <scope>PHOSPHORYLATION [LARGE SCALE ANALYSIS] AT SER-633; SER-647 AND THR-731</scope>
    <scope>IDENTIFICATION BY MASS SPECTROMETRY [LARGE SCALE ANALYSIS]</scope>
    <source>
        <tissue>Cervix carcinoma</tissue>
    </source>
</reference>
<reference key="14">
    <citation type="journal article" date="2009" name="Sci. Signal.">
        <title>Quantitative phosphoproteomic analysis of T cell receptor signaling reveals system-wide modulation of protein-protein interactions.</title>
        <authorList>
            <person name="Mayya V."/>
            <person name="Lundgren D.H."/>
            <person name="Hwang S.-I."/>
            <person name="Rezaul K."/>
            <person name="Wu L."/>
            <person name="Eng J.K."/>
            <person name="Rodionov V."/>
            <person name="Han D.K."/>
        </authorList>
    </citation>
    <scope>IDENTIFICATION BY MASS SPECTROMETRY [LARGE SCALE ANALYSIS]</scope>
    <source>
        <tissue>Leukemic T-cell</tissue>
    </source>
</reference>
<reference key="15">
    <citation type="journal article" date="2013" name="J. Proteome Res.">
        <title>Toward a comprehensive characterization of a human cancer cell phosphoproteome.</title>
        <authorList>
            <person name="Zhou H."/>
            <person name="Di Palma S."/>
            <person name="Preisinger C."/>
            <person name="Peng M."/>
            <person name="Polat A.N."/>
            <person name="Heck A.J."/>
            <person name="Mohammed S."/>
        </authorList>
    </citation>
    <scope>PHOSPHORYLATION [LARGE SCALE ANALYSIS] AT SER-8; SER-613; SER-647; SER-651; THR-731; SER-906 AND SER-909</scope>
    <scope>IDENTIFICATION BY MASS SPECTROMETRY [LARGE SCALE ANALYSIS]</scope>
    <source>
        <tissue>Cervix carcinoma</tissue>
        <tissue>Erythroleukemia</tissue>
    </source>
</reference>
<reference key="16">
    <citation type="journal article" date="2014" name="J. Proteomics">
        <title>An enzyme assisted RP-RPLC approach for in-depth analysis of human liver phosphoproteome.</title>
        <authorList>
            <person name="Bian Y."/>
            <person name="Song C."/>
            <person name="Cheng K."/>
            <person name="Dong M."/>
            <person name="Wang F."/>
            <person name="Huang J."/>
            <person name="Sun D."/>
            <person name="Wang L."/>
            <person name="Ye M."/>
            <person name="Zou H."/>
        </authorList>
    </citation>
    <scope>PHOSPHORYLATION [LARGE SCALE ANALYSIS] AT THR-731</scope>
    <scope>IDENTIFICATION BY MASS SPECTROMETRY [LARGE SCALE ANALYSIS]</scope>
    <source>
        <tissue>Liver</tissue>
    </source>
</reference>
<reference key="17">
    <citation type="journal article" date="2006" name="Science">
        <title>The consensus coding sequences of human breast and colorectal cancers.</title>
        <authorList>
            <person name="Sjoeblom T."/>
            <person name="Jones S."/>
            <person name="Wood L.D."/>
            <person name="Parsons D.W."/>
            <person name="Lin J."/>
            <person name="Barber T.D."/>
            <person name="Mandelker D."/>
            <person name="Leary R.J."/>
            <person name="Ptak J."/>
            <person name="Silliman N."/>
            <person name="Szabo S."/>
            <person name="Buckhaults P."/>
            <person name="Farrell C."/>
            <person name="Meeh P."/>
            <person name="Markowitz S.D."/>
            <person name="Willis J."/>
            <person name="Dawson D."/>
            <person name="Willson J.K.V."/>
            <person name="Gazdar A.F."/>
            <person name="Hartigan J."/>
            <person name="Wu L."/>
            <person name="Liu C."/>
            <person name="Parmigiani G."/>
            <person name="Park B.H."/>
            <person name="Bachman K.E."/>
            <person name="Papadopoulos N."/>
            <person name="Vogelstein B."/>
            <person name="Kinzler K.W."/>
            <person name="Velculescu V.E."/>
        </authorList>
    </citation>
    <scope>VARIANT [LARGE SCALE ANALYSIS] LEU-221</scope>
</reference>
<reference key="18">
    <citation type="journal article" date="2020" name="Nat. Immunol.">
        <title>STEEP mediates STING ER exit and activation of signaling.</title>
        <authorList>
            <person name="Zhang B.C."/>
            <person name="Nandakumar R."/>
            <person name="Reinert L.S."/>
            <person name="Huang J."/>
            <person name="Laustsen A."/>
            <person name="Gao Z.L."/>
            <person name="Sun C.L."/>
            <person name="Jensen S.B."/>
            <person name="Troldborg A."/>
            <person name="Assil S."/>
            <person name="Berthelsen M.F."/>
            <person name="Scavenius C."/>
            <person name="Zhang Y."/>
            <person name="Windross S.J."/>
            <person name="Olagnier D."/>
            <person name="Prabakaran T."/>
            <person name="Bodda C."/>
            <person name="Narita R."/>
            <person name="Cai Y."/>
            <person name="Zhang C.G."/>
            <person name="Stenmark H."/>
            <person name="Doucet C.M."/>
            <person name="Noda T."/>
            <person name="Guo Z."/>
            <person name="Goldbach-Mansky R."/>
            <person name="Hartmann R."/>
            <person name="Chen Z.J."/>
            <person name="Enghild J.J."/>
            <person name="Bak R.O."/>
            <person name="Thomsen M.K."/>
            <person name="Paludan S.R."/>
        </authorList>
    </citation>
    <scope>MUTAGENESIS OF CYS-413</scope>
</reference>
<reference key="19">
    <citation type="journal article" date="2020" name="Nat. Immunol.">
        <authorList>
            <person name="Zhang B.C."/>
            <person name="Nandakumar R."/>
            <person name="Reinert L.S."/>
            <person name="Huang J."/>
            <person name="Laustsen A."/>
            <person name="Gao Z.L."/>
            <person name="Sun C.L."/>
            <person name="Jensen S.B."/>
            <person name="Troldborg A."/>
            <person name="Assil S."/>
            <person name="Berthelsen M.F."/>
            <person name="Scavenius C."/>
            <person name="Zhang Y."/>
            <person name="Windross S.J."/>
            <person name="Olagnier D."/>
            <person name="Prabakaran T."/>
            <person name="Bodda C."/>
            <person name="Narita R."/>
            <person name="Cai Y."/>
            <person name="Zhang C.G."/>
            <person name="Stenmark H."/>
            <person name="Doucet C.M."/>
            <person name="Noda T."/>
            <person name="Guo Z."/>
            <person name="Goldbach-Mansky R."/>
            <person name="Hartmann R."/>
            <person name="Chen Z.J."/>
            <person name="Enghild J.J."/>
            <person name="Bak R.O."/>
            <person name="Thomsen M.K."/>
            <person name="Paludan S.R."/>
        </authorList>
    </citation>
    <scope>ERRATUM OF PUBMED:32690950</scope>
</reference>
<reference key="20">
    <citation type="journal article" date="2015" name="Mol. Cell. Proteomics">
        <title>Myotubularin-related proteins 3 and 4 interact with polo-like kinase 1 and centrosomal protein of 55 kDa to ensure proper abscission.</title>
        <authorList>
            <person name="St-Denis N."/>
            <person name="Gupta G.D."/>
            <person name="Lin Z.Y."/>
            <person name="Gonzalez-Badillo B."/>
            <person name="Pelletier L."/>
            <person name="Gingras A.C."/>
        </authorList>
    </citation>
    <scope>FUNCTION</scope>
    <scope>SUBUNIT</scope>
    <scope>INTERACTION WITH CEP55 AND PLK1</scope>
    <scope>DOMAIN</scope>
    <scope>PHOSPHORYLATION</scope>
    <scope>MUTAGENESIS OF CYS-413 AND CYS-1174</scope>
</reference>
<proteinExistence type="evidence at protein level"/>
<gene>
    <name evidence="20" type="primary">MTMR3</name>
    <name evidence="19" type="synonym">KIAA0371</name>
    <name evidence="20" type="synonym">ZFYVE10</name>
</gene>
<protein>
    <recommendedName>
        <fullName evidence="17">Phosphatidylinositol-3,5-bisphosphate 3-phosphatase MTMR3</fullName>
        <ecNumber evidence="10">3.1.3.95</ecNumber>
    </recommendedName>
    <alternativeName>
        <fullName evidence="14">FYVE domain-containing dual specificity protein phosphatase 1</fullName>
        <shortName evidence="14">FYVE-DSP1</shortName>
    </alternativeName>
    <alternativeName>
        <fullName evidence="20">Myotubularin-related protein 3</fullName>
    </alternativeName>
    <alternativeName>
        <fullName evidence="17">Phosphatidylinositol-3,5-bisphosphate 3-phosphatase</fullName>
    </alternativeName>
    <alternativeName>
        <fullName evidence="17">Phosphatidylinositol-3-phosphate phosphatase</fullName>
    </alternativeName>
    <alternativeName>
        <fullName>Zinc finger FYVE domain-containing protein 10</fullName>
    </alternativeName>
</protein>
<name>MTMR3_HUMAN</name>
<organism>
    <name type="scientific">Homo sapiens</name>
    <name type="common">Human</name>
    <dbReference type="NCBI Taxonomy" id="9606"/>
    <lineage>
        <taxon>Eukaryota</taxon>
        <taxon>Metazoa</taxon>
        <taxon>Chordata</taxon>
        <taxon>Craniata</taxon>
        <taxon>Vertebrata</taxon>
        <taxon>Euteleostomi</taxon>
        <taxon>Mammalia</taxon>
        <taxon>Eutheria</taxon>
        <taxon>Euarchontoglires</taxon>
        <taxon>Primates</taxon>
        <taxon>Haplorrhini</taxon>
        <taxon>Catarrhini</taxon>
        <taxon>Hominidae</taxon>
        <taxon>Homo</taxon>
    </lineage>
</organism>